<feature type="chain" id="PRO_1000061832" description="Ribosomal RNA large subunit methyltransferase H">
    <location>
        <begin position="1"/>
        <end position="155"/>
    </location>
</feature>
<feature type="binding site" evidence="1">
    <location>
        <position position="72"/>
    </location>
    <ligand>
        <name>S-adenosyl-L-methionine</name>
        <dbReference type="ChEBI" id="CHEBI:59789"/>
    </ligand>
</feature>
<feature type="binding site" evidence="1">
    <location>
        <position position="103"/>
    </location>
    <ligand>
        <name>S-adenosyl-L-methionine</name>
        <dbReference type="ChEBI" id="CHEBI:59789"/>
    </ligand>
</feature>
<feature type="binding site" evidence="1">
    <location>
        <begin position="122"/>
        <end position="127"/>
    </location>
    <ligand>
        <name>S-adenosyl-L-methionine</name>
        <dbReference type="ChEBI" id="CHEBI:59789"/>
    </ligand>
</feature>
<organism>
    <name type="scientific">Cereibacter sphaeroides (strain ATCC 17029 / ATH 2.4.9)</name>
    <name type="common">Rhodobacter sphaeroides</name>
    <dbReference type="NCBI Taxonomy" id="349101"/>
    <lineage>
        <taxon>Bacteria</taxon>
        <taxon>Pseudomonadati</taxon>
        <taxon>Pseudomonadota</taxon>
        <taxon>Alphaproteobacteria</taxon>
        <taxon>Rhodobacterales</taxon>
        <taxon>Paracoccaceae</taxon>
        <taxon>Cereibacter</taxon>
    </lineage>
</organism>
<reference key="1">
    <citation type="submission" date="2007-02" db="EMBL/GenBank/DDBJ databases">
        <title>Complete sequence of chromosome 1 of Rhodobacter sphaeroides ATCC 17029.</title>
        <authorList>
            <person name="Copeland A."/>
            <person name="Lucas S."/>
            <person name="Lapidus A."/>
            <person name="Barry K."/>
            <person name="Detter J.C."/>
            <person name="Glavina del Rio T."/>
            <person name="Hammon N."/>
            <person name="Israni S."/>
            <person name="Dalin E."/>
            <person name="Tice H."/>
            <person name="Pitluck S."/>
            <person name="Kiss H."/>
            <person name="Brettin T."/>
            <person name="Bruce D."/>
            <person name="Han C."/>
            <person name="Tapia R."/>
            <person name="Gilna P."/>
            <person name="Schmutz J."/>
            <person name="Larimer F."/>
            <person name="Land M."/>
            <person name="Hauser L."/>
            <person name="Kyrpides N."/>
            <person name="Mikhailova N."/>
            <person name="Richardson P."/>
            <person name="Mackenzie C."/>
            <person name="Choudhary M."/>
            <person name="Donohue T.J."/>
            <person name="Kaplan S."/>
        </authorList>
    </citation>
    <scope>NUCLEOTIDE SEQUENCE [LARGE SCALE GENOMIC DNA]</scope>
    <source>
        <strain>ATCC 17029 / ATH 2.4.9</strain>
    </source>
</reference>
<protein>
    <recommendedName>
        <fullName evidence="1">Ribosomal RNA large subunit methyltransferase H</fullName>
        <ecNumber evidence="1">2.1.1.177</ecNumber>
    </recommendedName>
    <alternativeName>
        <fullName evidence="1">23S rRNA (pseudouridine1915-N3)-methyltransferase</fullName>
    </alternativeName>
    <alternativeName>
        <fullName evidence="1">23S rRNA m3Psi1915 methyltransferase</fullName>
    </alternativeName>
    <alternativeName>
        <fullName evidence="1">rRNA (pseudouridine-N3-)-methyltransferase RlmH</fullName>
    </alternativeName>
</protein>
<gene>
    <name evidence="1" type="primary">rlmH</name>
    <name type="ordered locus">Rsph17029_2526</name>
</gene>
<dbReference type="EC" id="2.1.1.177" evidence="1"/>
<dbReference type="EMBL" id="CP000577">
    <property type="protein sequence ID" value="ABN77628.1"/>
    <property type="molecule type" value="Genomic_DNA"/>
</dbReference>
<dbReference type="RefSeq" id="WP_011841725.1">
    <property type="nucleotide sequence ID" value="NC_009049.1"/>
</dbReference>
<dbReference type="SMR" id="A3PMR2"/>
<dbReference type="KEGG" id="rsh:Rsph17029_2526"/>
<dbReference type="HOGENOM" id="CLU_100552_1_1_5"/>
<dbReference type="GO" id="GO:0005737">
    <property type="term" value="C:cytoplasm"/>
    <property type="evidence" value="ECO:0007669"/>
    <property type="project" value="UniProtKB-SubCell"/>
</dbReference>
<dbReference type="GO" id="GO:0070038">
    <property type="term" value="F:rRNA (pseudouridine-N3-)-methyltransferase activity"/>
    <property type="evidence" value="ECO:0007669"/>
    <property type="project" value="UniProtKB-UniRule"/>
</dbReference>
<dbReference type="CDD" id="cd18081">
    <property type="entry name" value="RlmH-like"/>
    <property type="match status" value="1"/>
</dbReference>
<dbReference type="Gene3D" id="3.40.1280.10">
    <property type="match status" value="1"/>
</dbReference>
<dbReference type="HAMAP" id="MF_00658">
    <property type="entry name" value="23SrRNA_methyltr_H"/>
    <property type="match status" value="1"/>
</dbReference>
<dbReference type="InterPro" id="IPR029028">
    <property type="entry name" value="Alpha/beta_knot_MTases"/>
</dbReference>
<dbReference type="InterPro" id="IPR003742">
    <property type="entry name" value="RlmH-like"/>
</dbReference>
<dbReference type="InterPro" id="IPR029026">
    <property type="entry name" value="tRNA_m1G_MTases_N"/>
</dbReference>
<dbReference type="NCBIfam" id="NF000988">
    <property type="entry name" value="PRK00103.2-2"/>
    <property type="match status" value="1"/>
</dbReference>
<dbReference type="NCBIfam" id="NF000989">
    <property type="entry name" value="PRK00103.2-3"/>
    <property type="match status" value="1"/>
</dbReference>
<dbReference type="PANTHER" id="PTHR33603">
    <property type="entry name" value="METHYLTRANSFERASE"/>
    <property type="match status" value="1"/>
</dbReference>
<dbReference type="PANTHER" id="PTHR33603:SF1">
    <property type="entry name" value="RIBOSOMAL RNA LARGE SUBUNIT METHYLTRANSFERASE H"/>
    <property type="match status" value="1"/>
</dbReference>
<dbReference type="Pfam" id="PF02590">
    <property type="entry name" value="SPOUT_MTase"/>
    <property type="match status" value="1"/>
</dbReference>
<dbReference type="PIRSF" id="PIRSF004505">
    <property type="entry name" value="MT_bac"/>
    <property type="match status" value="1"/>
</dbReference>
<dbReference type="SUPFAM" id="SSF75217">
    <property type="entry name" value="alpha/beta knot"/>
    <property type="match status" value="1"/>
</dbReference>
<name>RLMH_CERS1</name>
<comment type="function">
    <text evidence="1">Specifically methylates the pseudouridine at position 1915 (m3Psi1915) in 23S rRNA.</text>
</comment>
<comment type="catalytic activity">
    <reaction evidence="1">
        <text>pseudouridine(1915) in 23S rRNA + S-adenosyl-L-methionine = N(3)-methylpseudouridine(1915) in 23S rRNA + S-adenosyl-L-homocysteine + H(+)</text>
        <dbReference type="Rhea" id="RHEA:42752"/>
        <dbReference type="Rhea" id="RHEA-COMP:10221"/>
        <dbReference type="Rhea" id="RHEA-COMP:10222"/>
        <dbReference type="ChEBI" id="CHEBI:15378"/>
        <dbReference type="ChEBI" id="CHEBI:57856"/>
        <dbReference type="ChEBI" id="CHEBI:59789"/>
        <dbReference type="ChEBI" id="CHEBI:65314"/>
        <dbReference type="ChEBI" id="CHEBI:74486"/>
        <dbReference type="EC" id="2.1.1.177"/>
    </reaction>
</comment>
<comment type="subunit">
    <text evidence="1">Homodimer.</text>
</comment>
<comment type="subcellular location">
    <subcellularLocation>
        <location evidence="1">Cytoplasm</location>
    </subcellularLocation>
</comment>
<comment type="similarity">
    <text evidence="1">Belongs to the RNA methyltransferase RlmH family.</text>
</comment>
<keyword id="KW-0963">Cytoplasm</keyword>
<keyword id="KW-0489">Methyltransferase</keyword>
<keyword id="KW-0698">rRNA processing</keyword>
<keyword id="KW-0949">S-adenosyl-L-methionine</keyword>
<keyword id="KW-0808">Transferase</keyword>
<sequence>MKLQLCAVGRLRSGPERDLVEDYLARFERTGRPLGLPPVQLLELEDRKGGGMEAEADLIAKAVAPGAALVILDERGRTLSSPEFADHLAHWRDSGRDVALAIGGADGLAPRLRDRADLAMSLGRMVWPHMLVRVMLAEQLYRAATILAGSPYHRV</sequence>
<evidence type="ECO:0000255" key="1">
    <source>
        <dbReference type="HAMAP-Rule" id="MF_00658"/>
    </source>
</evidence>
<proteinExistence type="inferred from homology"/>
<accession>A3PMR2</accession>